<evidence type="ECO:0000250" key="1">
    <source>
        <dbReference type="UniProtKB" id="C7BKP9"/>
    </source>
</evidence>
<evidence type="ECO:0000250" key="2">
    <source>
        <dbReference type="UniProtKB" id="Q38802"/>
    </source>
</evidence>
<evidence type="ECO:0000250" key="3">
    <source>
        <dbReference type="UniProtKB" id="Q40577"/>
    </source>
</evidence>
<evidence type="ECO:0000255" key="4"/>
<evidence type="ECO:0000269" key="5">
    <source>
    </source>
</evidence>
<evidence type="ECO:0000269" key="6">
    <source>
    </source>
</evidence>
<evidence type="ECO:0000303" key="7">
    <source>
    </source>
</evidence>
<evidence type="ECO:0000303" key="8">
    <source>
    </source>
</evidence>
<evidence type="ECO:0000305" key="9"/>
<organism>
    <name type="scientific">Isodon rubescens</name>
    <name type="common">Rabdosia rubescens</name>
    <dbReference type="NCBI Taxonomy" id="587669"/>
    <lineage>
        <taxon>Eukaryota</taxon>
        <taxon>Viridiplantae</taxon>
        <taxon>Streptophyta</taxon>
        <taxon>Embryophyta</taxon>
        <taxon>Tracheophyta</taxon>
        <taxon>Spermatophyta</taxon>
        <taxon>Magnoliopsida</taxon>
        <taxon>eudicotyledons</taxon>
        <taxon>Gunneridae</taxon>
        <taxon>Pentapetalae</taxon>
        <taxon>asterids</taxon>
        <taxon>lamiids</taxon>
        <taxon>Lamiales</taxon>
        <taxon>Lamiaceae</taxon>
        <taxon>Nepetoideae</taxon>
        <taxon>Ocimeae</taxon>
        <taxon>Isodoninae</taxon>
        <taxon>Isodon</taxon>
    </lineage>
</organism>
<accession>A0A1W6QDJ1</accession>
<accession>A0A1X9IRR5</accession>
<dbReference type="EC" id="5.5.1.13" evidence="5 6"/>
<dbReference type="EMBL" id="KU180502">
    <property type="protein sequence ID" value="APJ36374.1"/>
    <property type="molecule type" value="mRNA"/>
</dbReference>
<dbReference type="EMBL" id="KX831653">
    <property type="protein sequence ID" value="ARO38143.1"/>
    <property type="molecule type" value="mRNA"/>
</dbReference>
<dbReference type="SMR" id="A0A1W6QDJ1"/>
<dbReference type="UniPathway" id="UPA00213"/>
<dbReference type="GO" id="GO:0009507">
    <property type="term" value="C:chloroplast"/>
    <property type="evidence" value="ECO:0007669"/>
    <property type="project" value="UniProtKB-SubCell"/>
</dbReference>
<dbReference type="GO" id="GO:0009905">
    <property type="term" value="F:ent-copalyl diphosphate synthase activity"/>
    <property type="evidence" value="ECO:0000314"/>
    <property type="project" value="UniProtKB"/>
</dbReference>
<dbReference type="GO" id="GO:0000287">
    <property type="term" value="F:magnesium ion binding"/>
    <property type="evidence" value="ECO:0007669"/>
    <property type="project" value="TreeGrafter"/>
</dbReference>
<dbReference type="GO" id="GO:0010333">
    <property type="term" value="F:terpene synthase activity"/>
    <property type="evidence" value="ECO:0007669"/>
    <property type="project" value="InterPro"/>
</dbReference>
<dbReference type="GO" id="GO:0009686">
    <property type="term" value="P:gibberellin biosynthetic process"/>
    <property type="evidence" value="ECO:0007669"/>
    <property type="project" value="TreeGrafter"/>
</dbReference>
<dbReference type="GO" id="GO:1901946">
    <property type="term" value="P:miltiradiene biosynthetic process"/>
    <property type="evidence" value="ECO:0000314"/>
    <property type="project" value="UniProtKB"/>
</dbReference>
<dbReference type="GO" id="GO:0016114">
    <property type="term" value="P:terpenoid biosynthetic process"/>
    <property type="evidence" value="ECO:0000314"/>
    <property type="project" value="UniProtKB"/>
</dbReference>
<dbReference type="FunFam" id="1.50.10.130:FF:000002">
    <property type="entry name" value="Ent-copalyl diphosphate synthase, chloroplastic"/>
    <property type="match status" value="1"/>
</dbReference>
<dbReference type="Gene3D" id="1.50.10.160">
    <property type="match status" value="1"/>
</dbReference>
<dbReference type="Gene3D" id="1.10.600.10">
    <property type="entry name" value="Farnesyl Diphosphate Synthase"/>
    <property type="match status" value="1"/>
</dbReference>
<dbReference type="Gene3D" id="1.50.10.130">
    <property type="entry name" value="Terpene synthase, N-terminal domain"/>
    <property type="match status" value="1"/>
</dbReference>
<dbReference type="InterPro" id="IPR008949">
    <property type="entry name" value="Isoprenoid_synthase_dom_sf"/>
</dbReference>
<dbReference type="InterPro" id="IPR001906">
    <property type="entry name" value="Terpene_synth_N"/>
</dbReference>
<dbReference type="InterPro" id="IPR036965">
    <property type="entry name" value="Terpene_synth_N_sf"/>
</dbReference>
<dbReference type="InterPro" id="IPR050148">
    <property type="entry name" value="Terpene_synthase-like"/>
</dbReference>
<dbReference type="InterPro" id="IPR008930">
    <property type="entry name" value="Terpenoid_cyclase/PrenylTrfase"/>
</dbReference>
<dbReference type="PANTHER" id="PTHR31739">
    <property type="entry name" value="ENT-COPALYL DIPHOSPHATE SYNTHASE, CHLOROPLASTIC"/>
    <property type="match status" value="1"/>
</dbReference>
<dbReference type="PANTHER" id="PTHR31739:SF4">
    <property type="entry name" value="ENT-COPALYL DIPHOSPHATE SYNTHASE, CHLOROPLASTIC"/>
    <property type="match status" value="1"/>
</dbReference>
<dbReference type="Pfam" id="PF01397">
    <property type="entry name" value="Terpene_synth"/>
    <property type="match status" value="1"/>
</dbReference>
<dbReference type="SFLD" id="SFLDG01014">
    <property type="entry name" value="Terpene_Cyclase_Like_1_N-term"/>
    <property type="match status" value="1"/>
</dbReference>
<dbReference type="SFLD" id="SFLDG01605">
    <property type="entry name" value="Terpene_Cyclase_Like_1_N-term"/>
    <property type="match status" value="1"/>
</dbReference>
<dbReference type="SUPFAM" id="SSF48239">
    <property type="entry name" value="Terpenoid cyclases/Protein prenyltransferases"/>
    <property type="match status" value="2"/>
</dbReference>
<dbReference type="SUPFAM" id="SSF48576">
    <property type="entry name" value="Terpenoid synthases"/>
    <property type="match status" value="1"/>
</dbReference>
<sequence length="796" mass="91115">MSSSSIVTSLLRPTTAADGVLPRQMAQVNSSCNIWRSKAKVGGINYFNPGNIKCVEEVHKSRQVVVAALKSLEYETEKPTNQDVVSEKMRVLSERIETMLQNMDEGEISISPYDTAWVALVEDTDGRPQFPTSLEWISNNQLADGSWGDRKFVIYDRILNTLACVVALTTWNMHPHKCNRGLRFIRDNMEKLENENEELMPIGFEVVFPSLIEAAQKLGIEIPHIDSPCIKKIQAMRDFKLKRIPMELLHKKPTSLLHSLEGMQGLVWEKLLDFRSDGSFLCSPSSTAYALQHTKDELCLQYLLKAVKKFNGGVPNVYPVDMFEHLWCVDRLQRLGICRYFRVQIKEMLDYVYKYWTDKGICWARNTNVQDVDDTAMGFRLLRMHGYDVSTDVFKQFEKAGEFCCFPGQSTHAITGMYNVYRTSQIMFDGEDILADAKNYSATFLHQKRLANELVDKWIITKDLPGEVGYALDVPFFASLPRLEARFFLEQYGGDDDVWIGKTLYRMPYVNSDTYLELAKLDYKKCQAVHQLEWKSIQKWYRDCKLGEFGLGEKRLLLAYFLAASTAFEPEKKGERLAWAKTAFLVETIASQQLSHEQKREFADEFEHGSSLNMENGGSYKTRTRLVEILSNTVSQLSFETLVAEGRDIKQQLSNTWQKWLKTWEEGGNLGEAEAQLLLQTLHLSSGLDESSFSHPKYHQLLEVTCKVCNQLRLFQNRKAHDAQGGISDLVIGTTFQIEASMQELVKLVFTKSSEDLDSITKQSFFAIARSFYYTAYCDAGAINSHIYKVLFENID</sequence>
<protein>
    <recommendedName>
        <fullName evidence="7 8">Ent-copalyl diphosphate synthase 4</fullName>
        <ecNumber evidence="5 6">5.5.1.13</ecNumber>
    </recommendedName>
    <alternativeName>
        <fullName evidence="8">Terpene synthase 5</fullName>
        <shortName evidence="8">IrTPS5</shortName>
    </alternativeName>
</protein>
<gene>
    <name evidence="7" type="primary">CPS4</name>
    <name evidence="8" type="synonym">TPS5</name>
</gene>
<keyword id="KW-0025">Alternative splicing</keyword>
<keyword id="KW-0150">Chloroplast</keyword>
<keyword id="KW-0413">Isomerase</keyword>
<keyword id="KW-0460">Magnesium</keyword>
<keyword id="KW-0479">Metal-binding</keyword>
<keyword id="KW-0934">Plastid</keyword>
<keyword id="KW-0809">Transit peptide</keyword>
<proteinExistence type="evidence at protein level"/>
<name>CPS4_ISORU</name>
<comment type="function">
    <text evidence="5">Involved in the biosynthesis of ent-kaurene diterpenoids natural products such as oridonin, miltiradiene, eriocalyxin B and nezukol, known to exhibit antitumor, anti-inflammatory and antibacterial activities (PubMed:28381502). Catalyzes the conversion of (2E,6E,10E)-geranylgeranyl diphosphate (GGPP) to ent-copalyl diphosphate (ent-CPP) (PubMed:28381502).</text>
</comment>
<comment type="catalytic activity">
    <reaction evidence="5 6">
        <text>(2E,6E,10E)-geranylgeranyl diphosphate = ent-copalyl diphosphate</text>
        <dbReference type="Rhea" id="RHEA:14841"/>
        <dbReference type="ChEBI" id="CHEBI:58553"/>
        <dbReference type="ChEBI" id="CHEBI:58756"/>
        <dbReference type="EC" id="5.5.1.13"/>
    </reaction>
    <physiologicalReaction direction="left-to-right" evidence="5 6">
        <dbReference type="Rhea" id="RHEA:14842"/>
    </physiologicalReaction>
</comment>
<comment type="cofactor">
    <cofactor evidence="3">
        <name>Mg(2+)</name>
        <dbReference type="ChEBI" id="CHEBI:18420"/>
    </cofactor>
</comment>
<comment type="pathway">
    <text evidence="5 6">Secondary metabolite biosynthesis; terpenoid biosynthesis.</text>
</comment>
<comment type="subcellular location">
    <subcellularLocation>
        <location evidence="4">Plastid</location>
        <location evidence="4">Chloroplast</location>
    </subcellularLocation>
</comment>
<comment type="alternative products">
    <event type="alternative splicing"/>
    <isoform>
        <id>A0A1W6QDJ1-1</id>
        <name>1</name>
        <sequence type="displayed"/>
    </isoform>
    <isoform>
        <id>A0A1W6QDJ1-2</id>
        <name>2</name>
        <sequence type="described" ref="VSP_060981 VSP_060982 VSP_060983 VSP_060984 VSP_060985 VSP_060986 VSP_060987 VSP_060988"/>
    </isoform>
</comment>
<comment type="tissue specificity">
    <text evidence="5 6">Highly expressed in leaves, and, at low levels, in stems, but barely in roots and flowers.</text>
</comment>
<comment type="domain">
    <text evidence="9">The Asp-Xaa-Asp-Asp (DXDD) motif is important for the catalytic activity, presumably through binding to Mg(2+).</text>
</comment>
<comment type="miscellaneous">
    <text evidence="5">Abietane diterpenoids (e.g. miltiradiene, abietatriene and ferruginol) accumulate specifically in the periderm of roots (PubMed:28381502). The ent-kaurene diterpenoid oridonin, main constituent of Isodon rubescens, accumulates in leaves (PubMed:28381502).</text>
</comment>
<comment type="similarity">
    <text evidence="9">Belongs to the terpene synthase family. Tpsc subfamily.</text>
</comment>
<feature type="transit peptide" description="Chloroplast" evidence="4">
    <location>
        <begin position="1"/>
        <end position="23"/>
    </location>
</feature>
<feature type="chain" id="PRO_0000452375" description="Ent-copalyl diphosphate synthase 4">
    <location>
        <begin position="24"/>
        <end position="796"/>
    </location>
</feature>
<feature type="short sequence motif" description="DXDD motif" evidence="9">
    <location>
        <begin position="371"/>
        <end position="374"/>
    </location>
</feature>
<feature type="binding site" evidence="2">
    <location>
        <position position="240"/>
    </location>
    <ligand>
        <name>substrate</name>
    </ligand>
</feature>
<feature type="binding site" evidence="1">
    <location>
        <position position="371"/>
    </location>
    <ligand>
        <name>Mg(2+)</name>
        <dbReference type="ChEBI" id="CHEBI:18420"/>
    </ligand>
</feature>
<feature type="binding site" evidence="1">
    <location>
        <position position="373"/>
    </location>
    <ligand>
        <name>Mg(2+)</name>
        <dbReference type="ChEBI" id="CHEBI:18420"/>
    </ligand>
</feature>
<feature type="binding site" evidence="2">
    <location>
        <position position="457"/>
    </location>
    <ligand>
        <name>substrate</name>
    </ligand>
</feature>
<feature type="splice variant" id="VSP_060981" description="In isoform 2.">
    <original>CKLGEFGLGEKR</original>
    <variation>WNLVEFGLSERS</variation>
    <location>
        <begin position="544"/>
        <end position="555"/>
    </location>
</feature>
<feature type="splice variant" id="VSP_060982" description="In isoform 2.">
    <original>FLAASTAFEPEKKG</original>
    <variation>YIAASTVFEPERSR</variation>
    <location>
        <begin position="561"/>
        <end position="574"/>
    </location>
</feature>
<feature type="splice variant" id="VSP_060983" description="In isoform 2.">
    <original>KTAFLVE</original>
    <variation>ITAILVK</variation>
    <location>
        <begin position="581"/>
        <end position="587"/>
    </location>
</feature>
<feature type="splice variant" id="VSP_060984" description="In isoform 2.">
    <original>QLSHEQKREFADEFEHGSSLNMENGGSYKTRTRLVEILSNTVSQLSFET</original>
    <variation>RQLPLEQKGEFLGSILENEDGGRLIEFLINTISQLSSEI</variation>
    <location>
        <begin position="593"/>
        <end position="641"/>
    </location>
</feature>
<feature type="splice variant" id="VSP_060985" description="In isoform 2.">
    <original>WEEGGN</original>
    <variation>CKEGGDDD</variation>
    <location>
        <begin position="664"/>
        <end position="669"/>
    </location>
</feature>
<feature type="splice variant" id="VSP_060986" description="In isoform 2.">
    <original>QLLLQTL</original>
    <variation>RLILHTQ</variation>
    <location>
        <begin position="676"/>
        <end position="682"/>
    </location>
</feature>
<feature type="splice variant" id="VSP_060987" description="In isoform 2.">
    <original>VTCKVCN</original>
    <variation>ATSKVCG</variation>
    <location>
        <begin position="704"/>
        <end position="710"/>
    </location>
</feature>
<feature type="splice variant" id="VSP_060988" description="In isoform 2.">
    <original>NRKAHDAQGGISDLVI</original>
    <variation>SRKQVDVDLAT</variation>
    <location>
        <begin position="717"/>
        <end position="732"/>
    </location>
</feature>
<feature type="sequence conflict" description="In Ref. 1; APJ36374." evidence="9" ref="1">
    <original>I</original>
    <variation>N</variation>
    <location>
        <position position="6"/>
    </location>
</feature>
<feature type="sequence conflict" description="In Ref. 1; APJ36374." evidence="9" ref="1">
    <original>AQ</original>
    <variation>VR</variation>
    <location>
        <begin position="26"/>
        <end position="27"/>
    </location>
</feature>
<feature type="sequence conflict" description="In Ref. 1; APJ36374." evidence="9" ref="1">
    <original>V</original>
    <variation>A</variation>
    <location>
        <position position="65"/>
    </location>
</feature>
<feature type="sequence conflict" description="In Ref. 1; APJ36374." evidence="9" ref="1">
    <original>E</original>
    <variation>K</variation>
    <location>
        <position position="94"/>
    </location>
</feature>
<feature type="sequence conflict" description="In Ref. 1; APJ36374." evidence="9" ref="1">
    <original>N</original>
    <variation>D</variation>
    <location>
        <position position="196"/>
    </location>
</feature>
<feature type="sequence conflict" description="In Ref. 1; APJ36374." evidence="9" ref="1">
    <original>V</original>
    <variation>A</variation>
    <location>
        <position position="343"/>
    </location>
</feature>
<feature type="sequence conflict" description="In Ref. 1; APJ36374." evidence="9" ref="1">
    <original>G</original>
    <variation>S</variation>
    <location>
        <position position="386"/>
    </location>
</feature>
<feature type="sequence conflict" description="In Ref. 1; APJ36374." evidence="9" ref="1">
    <original>K</original>
    <variation>E</variation>
    <location>
        <position position="524"/>
    </location>
</feature>
<feature type="sequence conflict" description="In Ref. 1; APJ36374." evidence="9" ref="1">
    <original>K</original>
    <variation>E</variation>
    <location>
        <position position="535"/>
    </location>
</feature>
<feature type="sequence conflict" description="In Ref. 1; APJ36374." evidence="9" ref="1">
    <original>K</original>
    <variation>T</variation>
    <location>
        <position position="650"/>
    </location>
</feature>
<feature type="sequence conflict" description="In Ref. 1; APJ36374." evidence="9" ref="1">
    <original>S</original>
    <variation>G</variation>
    <location>
        <position position="741"/>
    </location>
</feature>
<feature type="sequence conflict" description="In Ref. 1; APJ36374." evidence="9" ref="1">
    <original>I</original>
    <variation>L</variation>
    <location>
        <position position="760"/>
    </location>
</feature>
<feature type="sequence conflict" description="In Ref. 1; APJ36374." evidence="9" ref="1">
    <original>A</original>
    <variation>S</variation>
    <location>
        <position position="767"/>
    </location>
</feature>
<feature type="sequence conflict" description="In Ref. 1; APJ36374." evidence="9" ref="1">
    <original>A</original>
    <variation>E</variation>
    <location>
        <position position="780"/>
    </location>
</feature>
<feature type="sequence conflict" description="In Ref. 1; APJ36374." evidence="9" ref="1">
    <original>Y</original>
    <variation>D</variation>
    <location>
        <position position="788"/>
    </location>
</feature>
<feature type="sequence conflict" description="In Ref. 1; APJ36374." evidence="9" ref="1">
    <original>N</original>
    <variation>K</variation>
    <location>
        <position position="794"/>
    </location>
</feature>
<reference key="1">
    <citation type="journal article" date="2017" name="Plant Physiol.">
        <title>Functional diversification of kaurene synthase-like genes in Isodon rubescens.</title>
        <authorList>
            <person name="Jin B."/>
            <person name="Cui G."/>
            <person name="Guo J."/>
            <person name="Tang J."/>
            <person name="Duan L."/>
            <person name="Lin H."/>
            <person name="Shen Y."/>
            <person name="Chen T."/>
            <person name="Zhang H."/>
            <person name="Huang L."/>
        </authorList>
    </citation>
    <scope>NUCLEOTIDE SEQUENCE [MRNA] (ISOFORM 2)</scope>
    <scope>FUNCTION</scope>
    <scope>PATHWAY</scope>
    <scope>CATALYTIC ACTIVITY</scope>
    <scope>TISSUE SPECIFICITY</scope>
</reference>
<reference key="2">
    <citation type="journal article" date="2017" name="PLoS ONE">
        <title>Biosynthesis of the oxygenated diterpene nezukol in the medicinal plant Isodon rubescens is catalyzed by a pair of diterpene synthases.</title>
        <authorList>
            <person name="Pelot K.A."/>
            <person name="Hagelthorn L.M."/>
            <person name="Addison J.B."/>
            <person name="Zerbe P."/>
        </authorList>
    </citation>
    <scope>NUCLEOTIDE SEQUENCE [MRNA] (ISOFORM 1)</scope>
    <scope>FUNCTION</scope>
    <scope>PATHWAY</scope>
    <scope>CATALYTIC ACTIVITY</scope>
    <scope>TISSUE SPECIFICITY</scope>
</reference>